<organism>
    <name type="scientific">Gloydius ussuriensis</name>
    <name type="common">Ussuri mamushi</name>
    <name type="synonym">Gloydius blomhoffii ussuriensis</name>
    <dbReference type="NCBI Taxonomy" id="35671"/>
    <lineage>
        <taxon>Eukaryota</taxon>
        <taxon>Metazoa</taxon>
        <taxon>Chordata</taxon>
        <taxon>Craniata</taxon>
        <taxon>Vertebrata</taxon>
        <taxon>Euteleostomi</taxon>
        <taxon>Lepidosauria</taxon>
        <taxon>Squamata</taxon>
        <taxon>Bifurcata</taxon>
        <taxon>Unidentata</taxon>
        <taxon>Episquamata</taxon>
        <taxon>Toxicofera</taxon>
        <taxon>Serpentes</taxon>
        <taxon>Colubroidea</taxon>
        <taxon>Viperidae</taxon>
        <taxon>Crotalinae</taxon>
        <taxon>Gloydius</taxon>
    </lineage>
</organism>
<proteinExistence type="evidence at transcript level"/>
<protein>
    <recommendedName>
        <fullName>Zinc metalloproteinase/disintegrin ussurin</fullName>
    </recommendedName>
    <component>
        <recommendedName>
            <fullName>Snake venom metalloproteinase ussurin</fullName>
            <shortName>SVMP</shortName>
            <ecNumber>3.4.24.-</ecNumber>
        </recommendedName>
    </component>
    <component>
        <recommendedName>
            <fullName>Disintegrin ussurin</fullName>
        </recommendedName>
    </component>
</protein>
<comment type="function">
    <molecule>Snake venom metalloproteinase ussurin</molecule>
    <text evidence="1">Impairs hemostasis in the envenomed animal.</text>
</comment>
<comment type="function">
    <molecule>Disintegrin ussurin</molecule>
    <text evidence="1">Inhibits platelet aggregation induced by ADP, thrombin, platelet-activating factor and collagen. Acts by inhibiting fibrinogen interaction with platelet receptors GPIIb/GPIIIa (ITGA2B/ITGB3) (By similarity).</text>
</comment>
<comment type="cofactor">
    <cofactor evidence="1">
        <name>Zn(2+)</name>
        <dbReference type="ChEBI" id="CHEBI:29105"/>
    </cofactor>
    <text evidence="1">Binds 1 zinc ion per subunit.</text>
</comment>
<comment type="subunit">
    <text evidence="1">Monomer.</text>
</comment>
<comment type="subcellular location">
    <subcellularLocation>
        <location evidence="1">Secreted</location>
    </subcellularLocation>
</comment>
<comment type="tissue specificity">
    <text>Expressed by the venom gland.</text>
</comment>
<comment type="similarity">
    <text evidence="6">Belongs to the venom metalloproteinase (M12B) family. P-II subfamily. P-IIa sub-subfamily.</text>
</comment>
<reference key="1">
    <citation type="journal article" date="2003" name="Sheng Wu Gong Cheng Xue Bao">
        <title>Molecular cloning and sequence analysis of ussurin, a new metalloproteinases/disintegrin from Gloydius ussuriensis.</title>
        <authorList>
            <person name="Sun D.-J."/>
            <person name="Gu H.D."/>
            <person name="Yang C.W."/>
            <person name="Hu C.G."/>
            <person name="Yang T.-S."/>
            <person name="Yan W.Q."/>
        </authorList>
    </citation>
    <scope>NUCLEOTIDE SEQUENCE [MRNA]</scope>
    <source>
        <tissue>Venom gland</tissue>
    </source>
</reference>
<dbReference type="EC" id="3.4.24.-"/>
<dbReference type="EMBL" id="AY204245">
    <property type="protein sequence ID" value="AAP20640.1"/>
    <property type="molecule type" value="mRNA"/>
</dbReference>
<dbReference type="EMBL" id="AY204246">
    <property type="protein sequence ID" value="AAP20641.1"/>
    <property type="molecule type" value="mRNA"/>
</dbReference>
<dbReference type="EMBL" id="AY204249">
    <property type="protein sequence ID" value="AAP20644.1"/>
    <property type="molecule type" value="mRNA"/>
</dbReference>
<dbReference type="SMR" id="Q7SZD9"/>
<dbReference type="MEROPS" id="M12.326"/>
<dbReference type="GO" id="GO:0005576">
    <property type="term" value="C:extracellular region"/>
    <property type="evidence" value="ECO:0007669"/>
    <property type="project" value="UniProtKB-SubCell"/>
</dbReference>
<dbReference type="GO" id="GO:0005886">
    <property type="term" value="C:plasma membrane"/>
    <property type="evidence" value="ECO:0007669"/>
    <property type="project" value="TreeGrafter"/>
</dbReference>
<dbReference type="GO" id="GO:0046872">
    <property type="term" value="F:metal ion binding"/>
    <property type="evidence" value="ECO:0007669"/>
    <property type="project" value="UniProtKB-KW"/>
</dbReference>
<dbReference type="GO" id="GO:0004222">
    <property type="term" value="F:metalloendopeptidase activity"/>
    <property type="evidence" value="ECO:0007669"/>
    <property type="project" value="InterPro"/>
</dbReference>
<dbReference type="GO" id="GO:0090729">
    <property type="term" value="F:toxin activity"/>
    <property type="evidence" value="ECO:0007669"/>
    <property type="project" value="UniProtKB-KW"/>
</dbReference>
<dbReference type="GO" id="GO:0006508">
    <property type="term" value="P:proteolysis"/>
    <property type="evidence" value="ECO:0007669"/>
    <property type="project" value="UniProtKB-KW"/>
</dbReference>
<dbReference type="CDD" id="cd04269">
    <property type="entry name" value="ZnMc_adamalysin_II_like"/>
    <property type="match status" value="1"/>
</dbReference>
<dbReference type="FunFam" id="3.40.390.10:FF:000002">
    <property type="entry name" value="Disintegrin and metalloproteinase domain-containing protein 22"/>
    <property type="match status" value="1"/>
</dbReference>
<dbReference type="FunFam" id="4.10.70.10:FF:000005">
    <property type="entry name" value="Zinc metalloproteinase/disintegrin"/>
    <property type="match status" value="1"/>
</dbReference>
<dbReference type="Gene3D" id="3.40.390.10">
    <property type="entry name" value="Collagenase (Catalytic Domain)"/>
    <property type="match status" value="1"/>
</dbReference>
<dbReference type="Gene3D" id="4.10.70.10">
    <property type="entry name" value="Disintegrin domain"/>
    <property type="match status" value="1"/>
</dbReference>
<dbReference type="InterPro" id="IPR018358">
    <property type="entry name" value="Disintegrin_CS"/>
</dbReference>
<dbReference type="InterPro" id="IPR001762">
    <property type="entry name" value="Disintegrin_dom"/>
</dbReference>
<dbReference type="InterPro" id="IPR036436">
    <property type="entry name" value="Disintegrin_dom_sf"/>
</dbReference>
<dbReference type="InterPro" id="IPR024079">
    <property type="entry name" value="MetalloPept_cat_dom_sf"/>
</dbReference>
<dbReference type="InterPro" id="IPR001590">
    <property type="entry name" value="Peptidase_M12B"/>
</dbReference>
<dbReference type="InterPro" id="IPR002870">
    <property type="entry name" value="Peptidase_M12B_N"/>
</dbReference>
<dbReference type="InterPro" id="IPR034027">
    <property type="entry name" value="Reprolysin_adamalysin"/>
</dbReference>
<dbReference type="PANTHER" id="PTHR11905">
    <property type="entry name" value="ADAM A DISINTEGRIN AND METALLOPROTEASE DOMAIN"/>
    <property type="match status" value="1"/>
</dbReference>
<dbReference type="PANTHER" id="PTHR11905:SF32">
    <property type="entry name" value="DISINTEGRIN AND METALLOPROTEINASE DOMAIN-CONTAINING PROTEIN 28"/>
    <property type="match status" value="1"/>
</dbReference>
<dbReference type="Pfam" id="PF00200">
    <property type="entry name" value="Disintegrin"/>
    <property type="match status" value="1"/>
</dbReference>
<dbReference type="Pfam" id="PF01562">
    <property type="entry name" value="Pep_M12B_propep"/>
    <property type="match status" value="1"/>
</dbReference>
<dbReference type="Pfam" id="PF01421">
    <property type="entry name" value="Reprolysin"/>
    <property type="match status" value="1"/>
</dbReference>
<dbReference type="PRINTS" id="PR00289">
    <property type="entry name" value="DISINTEGRIN"/>
</dbReference>
<dbReference type="SMART" id="SM00050">
    <property type="entry name" value="DISIN"/>
    <property type="match status" value="1"/>
</dbReference>
<dbReference type="SUPFAM" id="SSF57552">
    <property type="entry name" value="Blood coagulation inhibitor (disintegrin)"/>
    <property type="match status" value="1"/>
</dbReference>
<dbReference type="SUPFAM" id="SSF55486">
    <property type="entry name" value="Metalloproteases ('zincins'), catalytic domain"/>
    <property type="match status" value="1"/>
</dbReference>
<dbReference type="PROSITE" id="PS50215">
    <property type="entry name" value="ADAM_MEPRO"/>
    <property type="match status" value="1"/>
</dbReference>
<dbReference type="PROSITE" id="PS00427">
    <property type="entry name" value="DISINTEGRIN_1"/>
    <property type="match status" value="1"/>
</dbReference>
<dbReference type="PROSITE" id="PS50214">
    <property type="entry name" value="DISINTEGRIN_2"/>
    <property type="match status" value="1"/>
</dbReference>
<dbReference type="PROSITE" id="PS00142">
    <property type="entry name" value="ZINC_PROTEASE"/>
    <property type="match status" value="1"/>
</dbReference>
<feature type="signal peptide" evidence="3">
    <location>
        <begin position="1"/>
        <end position="20"/>
    </location>
</feature>
<feature type="propeptide" id="PRO_0000321886" evidence="1">
    <location>
        <begin position="21"/>
        <end position="190"/>
    </location>
</feature>
<feature type="chain" id="PRO_0000321887" description="Snake venom metalloproteinase ussurin">
    <location>
        <begin position="191"/>
        <end position="389"/>
    </location>
</feature>
<feature type="propeptide" id="PRO_0000321888" evidence="1">
    <location>
        <begin position="390"/>
        <end position="413"/>
    </location>
</feature>
<feature type="chain" id="PRO_0000321889" description="Disintegrin ussurin">
    <location>
        <begin position="414"/>
        <end position="478"/>
    </location>
</feature>
<feature type="domain" description="Peptidase M12B" evidence="5">
    <location>
        <begin position="193"/>
        <end position="389"/>
    </location>
</feature>
<feature type="domain" description="Disintegrin" evidence="4">
    <location>
        <begin position="397"/>
        <end position="478"/>
    </location>
</feature>
<feature type="short sequence motif" description="Cell attachment site">
    <location>
        <begin position="456"/>
        <end position="458"/>
    </location>
</feature>
<feature type="active site" evidence="5">
    <location>
        <position position="330"/>
    </location>
</feature>
<feature type="binding site" evidence="1">
    <location>
        <position position="196"/>
    </location>
    <ligand>
        <name>Ca(2+)</name>
        <dbReference type="ChEBI" id="CHEBI:29108"/>
    </ligand>
</feature>
<feature type="binding site" evidence="1">
    <location>
        <position position="280"/>
    </location>
    <ligand>
        <name>Ca(2+)</name>
        <dbReference type="ChEBI" id="CHEBI:29108"/>
    </ligand>
</feature>
<feature type="binding site" evidence="1">
    <location>
        <position position="329"/>
    </location>
    <ligand>
        <name>Zn(2+)</name>
        <dbReference type="ChEBI" id="CHEBI:29105"/>
        <note>catalytic</note>
    </ligand>
</feature>
<feature type="binding site" evidence="1">
    <location>
        <position position="333"/>
    </location>
    <ligand>
        <name>Zn(2+)</name>
        <dbReference type="ChEBI" id="CHEBI:29105"/>
        <note>catalytic</note>
    </ligand>
</feature>
<feature type="binding site" evidence="1">
    <location>
        <position position="339"/>
    </location>
    <ligand>
        <name>Zn(2+)</name>
        <dbReference type="ChEBI" id="CHEBI:29105"/>
        <note>catalytic</note>
    </ligand>
</feature>
<feature type="binding site" evidence="1">
    <location>
        <position position="384"/>
    </location>
    <ligand>
        <name>Ca(2+)</name>
        <dbReference type="ChEBI" id="CHEBI:29108"/>
    </ligand>
</feature>
<feature type="binding site" evidence="1">
    <location>
        <position position="387"/>
    </location>
    <ligand>
        <name>Ca(2+)</name>
        <dbReference type="ChEBI" id="CHEBI:29108"/>
    </ligand>
</feature>
<feature type="disulfide bond" evidence="5">
    <location>
        <begin position="304"/>
        <end position="384"/>
    </location>
</feature>
<feature type="disulfide bond" evidence="5">
    <location>
        <begin position="344"/>
        <end position="368"/>
    </location>
</feature>
<feature type="disulfide bond" evidence="5">
    <location>
        <begin position="346"/>
        <end position="351"/>
    </location>
</feature>
<feature type="disulfide bond" evidence="2">
    <location>
        <begin position="411"/>
        <end position="426"/>
    </location>
</feature>
<feature type="disulfide bond" evidence="2">
    <location>
        <begin position="413"/>
        <end position="421"/>
    </location>
</feature>
<feature type="disulfide bond" evidence="2">
    <location>
        <begin position="420"/>
        <end position="443"/>
    </location>
</feature>
<feature type="disulfide bond" evidence="2">
    <location>
        <begin position="434"/>
        <end position="440"/>
    </location>
</feature>
<feature type="disulfide bond" evidence="2">
    <location>
        <begin position="439"/>
        <end position="464"/>
    </location>
</feature>
<feature type="disulfide bond" evidence="2 4">
    <location>
        <begin position="452"/>
        <end position="471"/>
    </location>
</feature>
<name>VM2US_GLOUS</name>
<keyword id="KW-0106">Calcium</keyword>
<keyword id="KW-1217">Cell adhesion impairing toxin</keyword>
<keyword id="KW-1015">Disulfide bond</keyword>
<keyword id="KW-1199">Hemostasis impairing toxin</keyword>
<keyword id="KW-0378">Hydrolase</keyword>
<keyword id="KW-0479">Metal-binding</keyword>
<keyword id="KW-0482">Metalloprotease</keyword>
<keyword id="KW-1201">Platelet aggregation inhibiting toxin</keyword>
<keyword id="KW-0645">Protease</keyword>
<keyword id="KW-0964">Secreted</keyword>
<keyword id="KW-0732">Signal</keyword>
<keyword id="KW-0800">Toxin</keyword>
<keyword id="KW-0862">Zinc</keyword>
<keyword id="KW-0865">Zymogen</keyword>
<sequence length="478" mass="53444">MIQVLLVTICLAAFPYQGSSIILESGNVNDYEIVYPRKVTALPKGAVQPKYEDTMQYELKVNGEPVVLHLEKNKGLFSKDYSETHYSPDGRKITTNPPVEDHCYYHGRIQNDADSTASISACNGLKGHFKLQGEMYLIEPLKLSDSEAHAVFKYEHIEKEDEDPKMCGVTETNWESYEPIKKASPLVVTTYQRYVELVVVADHRMVTKYNGNLIIIRTWVYEIFNTINEIYQRMNIHVALVGLEIWSNGDKIIVQSSADVTLDLFGTWGEIDLLKRKSHDNAQLLTPTDFDGPTIGLAYVGTMCDPKRSTGVVQDFSPINLLVAVTMAHEIGHNLGMNHDENYCSCGGFACIMSPVISPQPSKLFSYCSYIHYWTYINYRNPQCILNKPLRTDIVSTPVSGNELLEAGEECDCDSPGNPCCDAATCKLRPGAQCAEGLCCEQCRFMKEGTVCRIARGDDMDDYCNGISAGCPRNPFHA</sequence>
<accession>Q7SZD9</accession>
<accession>Q7SZD5</accession>
<accession>Q7SZD8</accession>
<evidence type="ECO:0000250" key="1"/>
<evidence type="ECO:0000250" key="2">
    <source>
        <dbReference type="UniProtKB" id="Q0NZX5"/>
    </source>
</evidence>
<evidence type="ECO:0000255" key="3"/>
<evidence type="ECO:0000255" key="4">
    <source>
        <dbReference type="PROSITE-ProRule" id="PRU00068"/>
    </source>
</evidence>
<evidence type="ECO:0000255" key="5">
    <source>
        <dbReference type="PROSITE-ProRule" id="PRU00276"/>
    </source>
</evidence>
<evidence type="ECO:0000305" key="6"/>